<reference key="1">
    <citation type="journal article" date="2002" name="Proc. Natl. Acad. Sci. U.S.A.">
        <title>The Brucella suis genome reveals fundamental similarities between animal and plant pathogens and symbionts.</title>
        <authorList>
            <person name="Paulsen I.T."/>
            <person name="Seshadri R."/>
            <person name="Nelson K.E."/>
            <person name="Eisen J.A."/>
            <person name="Heidelberg J.F."/>
            <person name="Read T.D."/>
            <person name="Dodson R.J."/>
            <person name="Umayam L.A."/>
            <person name="Brinkac L.M."/>
            <person name="Beanan M.J."/>
            <person name="Daugherty S.C."/>
            <person name="DeBoy R.T."/>
            <person name="Durkin A.S."/>
            <person name="Kolonay J.F."/>
            <person name="Madupu R."/>
            <person name="Nelson W.C."/>
            <person name="Ayodeji B."/>
            <person name="Kraul M."/>
            <person name="Shetty J."/>
            <person name="Malek J.A."/>
            <person name="Van Aken S.E."/>
            <person name="Riedmuller S."/>
            <person name="Tettelin H."/>
            <person name="Gill S.R."/>
            <person name="White O."/>
            <person name="Salzberg S.L."/>
            <person name="Hoover D.L."/>
            <person name="Lindler L.E."/>
            <person name="Halling S.M."/>
            <person name="Boyle S.M."/>
            <person name="Fraser C.M."/>
        </authorList>
    </citation>
    <scope>NUCLEOTIDE SEQUENCE [LARGE SCALE GENOMIC DNA]</scope>
    <source>
        <strain>1330</strain>
    </source>
</reference>
<reference key="2">
    <citation type="journal article" date="2011" name="J. Bacteriol.">
        <title>Revised genome sequence of Brucella suis 1330.</title>
        <authorList>
            <person name="Tae H."/>
            <person name="Shallom S."/>
            <person name="Settlage R."/>
            <person name="Preston D."/>
            <person name="Adams L.G."/>
            <person name="Garner H.R."/>
        </authorList>
    </citation>
    <scope>NUCLEOTIDE SEQUENCE [LARGE SCALE GENOMIC DNA]</scope>
    <source>
        <strain>1330</strain>
    </source>
</reference>
<accession>Q8FUW8</accession>
<accession>G0KE98</accession>
<name>Y1094_BRUSU</name>
<dbReference type="EC" id="7.4.2.-"/>
<dbReference type="EMBL" id="AE014292">
    <property type="protein sequence ID" value="AAN34259.1"/>
    <property type="molecule type" value="Genomic_DNA"/>
</dbReference>
<dbReference type="EMBL" id="CP002998">
    <property type="protein sequence ID" value="AEM20536.1"/>
    <property type="molecule type" value="Genomic_DNA"/>
</dbReference>
<dbReference type="RefSeq" id="WP_002965564.1">
    <property type="nucleotide sequence ID" value="NZ_KN046805.1"/>
</dbReference>
<dbReference type="SMR" id="Q8FUW8"/>
<dbReference type="KEGG" id="bms:BRA1094"/>
<dbReference type="KEGG" id="bsi:BS1330_II1086"/>
<dbReference type="PATRIC" id="fig|204722.21.peg.2014"/>
<dbReference type="HOGENOM" id="CLU_000604_1_23_5"/>
<dbReference type="PhylomeDB" id="Q8FUW8"/>
<dbReference type="Proteomes" id="UP000007104">
    <property type="component" value="Chromosome II"/>
</dbReference>
<dbReference type="GO" id="GO:0005886">
    <property type="term" value="C:plasma membrane"/>
    <property type="evidence" value="ECO:0007669"/>
    <property type="project" value="UniProtKB-SubCell"/>
</dbReference>
<dbReference type="GO" id="GO:0005524">
    <property type="term" value="F:ATP binding"/>
    <property type="evidence" value="ECO:0007669"/>
    <property type="project" value="UniProtKB-KW"/>
</dbReference>
<dbReference type="GO" id="GO:0016887">
    <property type="term" value="F:ATP hydrolysis activity"/>
    <property type="evidence" value="ECO:0007669"/>
    <property type="project" value="InterPro"/>
</dbReference>
<dbReference type="GO" id="GO:0015833">
    <property type="term" value="P:peptide transport"/>
    <property type="evidence" value="ECO:0007669"/>
    <property type="project" value="UniProtKB-KW"/>
</dbReference>
<dbReference type="GO" id="GO:0015031">
    <property type="term" value="P:protein transport"/>
    <property type="evidence" value="ECO:0007669"/>
    <property type="project" value="UniProtKB-KW"/>
</dbReference>
<dbReference type="CDD" id="cd03257">
    <property type="entry name" value="ABC_NikE_OppD_transporters"/>
    <property type="match status" value="1"/>
</dbReference>
<dbReference type="FunFam" id="3.40.50.300:FF:000016">
    <property type="entry name" value="Oligopeptide ABC transporter ATP-binding component"/>
    <property type="match status" value="1"/>
</dbReference>
<dbReference type="Gene3D" id="3.40.50.300">
    <property type="entry name" value="P-loop containing nucleotide triphosphate hydrolases"/>
    <property type="match status" value="1"/>
</dbReference>
<dbReference type="InterPro" id="IPR003593">
    <property type="entry name" value="AAA+_ATPase"/>
</dbReference>
<dbReference type="InterPro" id="IPR050388">
    <property type="entry name" value="ABC_Ni/Peptide_Import"/>
</dbReference>
<dbReference type="InterPro" id="IPR003439">
    <property type="entry name" value="ABC_transporter-like_ATP-bd"/>
</dbReference>
<dbReference type="InterPro" id="IPR017871">
    <property type="entry name" value="ABC_transporter-like_CS"/>
</dbReference>
<dbReference type="InterPro" id="IPR013563">
    <property type="entry name" value="Oligopep_ABC_C"/>
</dbReference>
<dbReference type="InterPro" id="IPR027417">
    <property type="entry name" value="P-loop_NTPase"/>
</dbReference>
<dbReference type="NCBIfam" id="TIGR01727">
    <property type="entry name" value="oligo_HPY"/>
    <property type="match status" value="1"/>
</dbReference>
<dbReference type="PANTHER" id="PTHR43297:SF2">
    <property type="entry name" value="DIPEPTIDE TRANSPORT ATP-BINDING PROTEIN DPPD"/>
    <property type="match status" value="1"/>
</dbReference>
<dbReference type="PANTHER" id="PTHR43297">
    <property type="entry name" value="OLIGOPEPTIDE TRANSPORT ATP-BINDING PROTEIN APPD"/>
    <property type="match status" value="1"/>
</dbReference>
<dbReference type="Pfam" id="PF00005">
    <property type="entry name" value="ABC_tran"/>
    <property type="match status" value="1"/>
</dbReference>
<dbReference type="Pfam" id="PF08352">
    <property type="entry name" value="oligo_HPY"/>
    <property type="match status" value="1"/>
</dbReference>
<dbReference type="SMART" id="SM00382">
    <property type="entry name" value="AAA"/>
    <property type="match status" value="1"/>
</dbReference>
<dbReference type="SUPFAM" id="SSF52540">
    <property type="entry name" value="P-loop containing nucleoside triphosphate hydrolases"/>
    <property type="match status" value="1"/>
</dbReference>
<dbReference type="PROSITE" id="PS00211">
    <property type="entry name" value="ABC_TRANSPORTER_1"/>
    <property type="match status" value="1"/>
</dbReference>
<dbReference type="PROSITE" id="PS50893">
    <property type="entry name" value="ABC_TRANSPORTER_2"/>
    <property type="match status" value="1"/>
</dbReference>
<evidence type="ECO:0000250" key="1"/>
<evidence type="ECO:0000255" key="2">
    <source>
        <dbReference type="PROSITE-ProRule" id="PRU00434"/>
    </source>
</evidence>
<evidence type="ECO:0000305" key="3"/>
<sequence>MTISLKTAPLLEVSNLSVDFRTDGGWINAVDDVNFTLAPRETLGLVGESGSGKSVTALSLLRLHDQRNSRLGGSVRYKGEDLFTLATSRLRQIRGHEIAMVFQDPIHTLNPVLTIGRQIEEGLRLHHGLQGREARKRAIELLDRVRIPDAARRIDEYPHRMSGGQRQRVMIAIAIAGDPKILIADEPTTALDVTVQAQIMELLRNLRDELSMSVILISHDLGLVSEFADRAMVMYAGQPVETGPIDKIFDEPLHPYTEGLLSAIPDLDDDLDRLPTIPGSIPEPSRRPPGCRFAPRCTFAQASCVKPQPIMSLTGGRASRCPPRLPTEECVL</sequence>
<gene>
    <name type="ordered locus">BRA1094</name>
    <name type="ordered locus">BS1330_II1086</name>
</gene>
<protein>
    <recommendedName>
        <fullName>Putative peptide import ATP-binding protein BRA1094/BS1330_II1086</fullName>
        <ecNumber>7.4.2.-</ecNumber>
    </recommendedName>
</protein>
<keyword id="KW-0067">ATP-binding</keyword>
<keyword id="KW-0997">Cell inner membrane</keyword>
<keyword id="KW-1003">Cell membrane</keyword>
<keyword id="KW-0472">Membrane</keyword>
<keyword id="KW-0547">Nucleotide-binding</keyword>
<keyword id="KW-0571">Peptide transport</keyword>
<keyword id="KW-0653">Protein transport</keyword>
<keyword id="KW-1278">Translocase</keyword>
<keyword id="KW-0813">Transport</keyword>
<feature type="chain" id="PRO_0000290160" description="Putative peptide import ATP-binding protein BRA1094/BS1330_II1086">
    <location>
        <begin position="1"/>
        <end position="332"/>
    </location>
</feature>
<feature type="domain" description="ABC transporter" evidence="2">
    <location>
        <begin position="11"/>
        <end position="261"/>
    </location>
</feature>
<feature type="binding site" evidence="2">
    <location>
        <begin position="47"/>
        <end position="54"/>
    </location>
    <ligand>
        <name>ATP</name>
        <dbReference type="ChEBI" id="CHEBI:30616"/>
    </ligand>
</feature>
<comment type="function">
    <text evidence="1">Probably part of an ABC transporter complex that could be involved in peptide import. Probably responsible for energy coupling to the transport system (By similarity).</text>
</comment>
<comment type="subunit">
    <text evidence="3">The complex is composed of two ATP-binding proteins (BRA1094), two transmembrane proteins (BRA1092 and BRA1093) and a solute-binding protein (BRA1090).</text>
</comment>
<comment type="subcellular location">
    <subcellularLocation>
        <location evidence="3">Cell inner membrane</location>
        <topology evidence="3">Peripheral membrane protein</topology>
    </subcellularLocation>
</comment>
<comment type="similarity">
    <text evidence="3">Belongs to the ABC transporter superfamily.</text>
</comment>
<proteinExistence type="inferred from homology"/>
<organism>
    <name type="scientific">Brucella suis biovar 1 (strain 1330)</name>
    <dbReference type="NCBI Taxonomy" id="204722"/>
    <lineage>
        <taxon>Bacteria</taxon>
        <taxon>Pseudomonadati</taxon>
        <taxon>Pseudomonadota</taxon>
        <taxon>Alphaproteobacteria</taxon>
        <taxon>Hyphomicrobiales</taxon>
        <taxon>Brucellaceae</taxon>
        <taxon>Brucella/Ochrobactrum group</taxon>
        <taxon>Brucella</taxon>
    </lineage>
</organism>